<dbReference type="EMBL" id="CP000742">
    <property type="protein sequence ID" value="ABR54147.1"/>
    <property type="molecule type" value="Genomic_DNA"/>
</dbReference>
<dbReference type="RefSeq" id="WP_011972050.1">
    <property type="nucleotide sequence ID" value="NC_009634.1"/>
</dbReference>
<dbReference type="STRING" id="406327.Mevan_0238"/>
<dbReference type="GeneID" id="5324961"/>
<dbReference type="KEGG" id="mvn:Mevan_0238"/>
<dbReference type="eggNOG" id="arCOG04274">
    <property type="taxonomic scope" value="Archaea"/>
</dbReference>
<dbReference type="HOGENOM" id="CLU_054212_0_2_2"/>
<dbReference type="OrthoDB" id="46105at2157"/>
<dbReference type="UniPathway" id="UPA00148"/>
<dbReference type="Proteomes" id="UP000001107">
    <property type="component" value="Chromosome"/>
</dbReference>
<dbReference type="GO" id="GO:0005886">
    <property type="term" value="C:plasma membrane"/>
    <property type="evidence" value="ECO:0007669"/>
    <property type="project" value="UniProtKB-SubCell"/>
</dbReference>
<dbReference type="GO" id="GO:0015420">
    <property type="term" value="F:ABC-type vitamin B12 transporter activity"/>
    <property type="evidence" value="ECO:0007669"/>
    <property type="project" value="UniProtKB-UniRule"/>
</dbReference>
<dbReference type="GO" id="GO:0048472">
    <property type="term" value="F:threonine-phosphate decarboxylase activity"/>
    <property type="evidence" value="ECO:0007669"/>
    <property type="project" value="InterPro"/>
</dbReference>
<dbReference type="GO" id="GO:0009236">
    <property type="term" value="P:cobalamin biosynthetic process"/>
    <property type="evidence" value="ECO:0007669"/>
    <property type="project" value="UniProtKB-UniRule"/>
</dbReference>
<dbReference type="HAMAP" id="MF_00024">
    <property type="entry name" value="CobD_CbiB"/>
    <property type="match status" value="1"/>
</dbReference>
<dbReference type="InterPro" id="IPR004485">
    <property type="entry name" value="Cobalamin_biosynth_CobD/CbiB"/>
</dbReference>
<dbReference type="NCBIfam" id="TIGR00380">
    <property type="entry name" value="cobal_cbiB"/>
    <property type="match status" value="1"/>
</dbReference>
<dbReference type="PANTHER" id="PTHR34308">
    <property type="entry name" value="COBALAMIN BIOSYNTHESIS PROTEIN CBIB"/>
    <property type="match status" value="1"/>
</dbReference>
<dbReference type="PANTHER" id="PTHR34308:SF1">
    <property type="entry name" value="COBALAMIN BIOSYNTHESIS PROTEIN CBIB"/>
    <property type="match status" value="1"/>
</dbReference>
<dbReference type="Pfam" id="PF03186">
    <property type="entry name" value="CobD_Cbib"/>
    <property type="match status" value="1"/>
</dbReference>
<proteinExistence type="inferred from homology"/>
<keyword id="KW-1003">Cell membrane</keyword>
<keyword id="KW-0169">Cobalamin biosynthesis</keyword>
<keyword id="KW-0472">Membrane</keyword>
<keyword id="KW-0812">Transmembrane</keyword>
<keyword id="KW-1133">Transmembrane helix</keyword>
<reference key="1">
    <citation type="submission" date="2007-06" db="EMBL/GenBank/DDBJ databases">
        <title>Complete sequence of Methanococcus vannielii SB.</title>
        <authorList>
            <consortium name="US DOE Joint Genome Institute"/>
            <person name="Copeland A."/>
            <person name="Lucas S."/>
            <person name="Lapidus A."/>
            <person name="Barry K."/>
            <person name="Glavina del Rio T."/>
            <person name="Dalin E."/>
            <person name="Tice H."/>
            <person name="Pitluck S."/>
            <person name="Chain P."/>
            <person name="Malfatti S."/>
            <person name="Shin M."/>
            <person name="Vergez L."/>
            <person name="Schmutz J."/>
            <person name="Larimer F."/>
            <person name="Land M."/>
            <person name="Hauser L."/>
            <person name="Kyrpides N."/>
            <person name="Anderson I."/>
            <person name="Sieprawska-Lupa M."/>
            <person name="Whitman W.B."/>
            <person name="Richardson P."/>
        </authorList>
    </citation>
    <scope>NUCLEOTIDE SEQUENCE [LARGE SCALE GENOMIC DNA]</scope>
    <source>
        <strain>ATCC 35089 / DSM 1224 / JCM 13029 / OCM 148 / SB</strain>
    </source>
</reference>
<evidence type="ECO:0000255" key="1">
    <source>
        <dbReference type="HAMAP-Rule" id="MF_00024"/>
    </source>
</evidence>
<feature type="chain" id="PRO_1000074382" description="Probable cobalamin biosynthesis protein CobD">
    <location>
        <begin position="1"/>
        <end position="310"/>
    </location>
</feature>
<feature type="transmembrane region" description="Helical" evidence="1">
    <location>
        <begin position="53"/>
        <end position="73"/>
    </location>
</feature>
<feature type="transmembrane region" description="Helical" evidence="1">
    <location>
        <begin position="80"/>
        <end position="100"/>
    </location>
</feature>
<feature type="transmembrane region" description="Helical" evidence="1">
    <location>
        <begin position="157"/>
        <end position="177"/>
    </location>
</feature>
<feature type="transmembrane region" description="Helical" evidence="1">
    <location>
        <begin position="215"/>
        <end position="235"/>
    </location>
</feature>
<feature type="transmembrane region" description="Helical" evidence="1">
    <location>
        <begin position="289"/>
        <end position="309"/>
    </location>
</feature>
<protein>
    <recommendedName>
        <fullName evidence="1">Probable cobalamin biosynthesis protein CobD</fullName>
    </recommendedName>
</protein>
<gene>
    <name evidence="1" type="primary">cobD</name>
    <name type="ordered locus">Mevan_0238</name>
</gene>
<sequence>MINPIYLIIADLLDRYIGEPPEKLHPVVFIGNFVKFLEKVFPSTHSVEKLKDLVFGFITVFLTVFTVFLIFFTLELILNLISNYYIKLFSYSLILSFSIGHKSLLEFSKAPIKYIMSGDIKSARKSVQHIVSRDTSTLDEKHVISAAVESSSENITDSIIAPLIYAAIFGLSGAFIYRAVNTMDAMLGYKNEKYRYYGKTAAYLDDILNFIPSRIAGILLIISAPFYGGKIVPAIYGYLKEGFKTPSPNSGYTMAVIANSLSMELEKIGCYKLGKGEITVLKAVNSLKAVDYSVLLFLVIYMVLYFNLIY</sequence>
<name>COBD_METVS</name>
<organism>
    <name type="scientific">Methanococcus vannielii (strain ATCC 35089 / DSM 1224 / JCM 13029 / OCM 148 / SB)</name>
    <dbReference type="NCBI Taxonomy" id="406327"/>
    <lineage>
        <taxon>Archaea</taxon>
        <taxon>Methanobacteriati</taxon>
        <taxon>Methanobacteriota</taxon>
        <taxon>Methanomada group</taxon>
        <taxon>Methanococci</taxon>
        <taxon>Methanococcales</taxon>
        <taxon>Methanococcaceae</taxon>
        <taxon>Methanococcus</taxon>
    </lineage>
</organism>
<comment type="function">
    <text evidence="1">Converts cobyric acid to cobinamide by the addition of aminopropanol on the F carboxylic group.</text>
</comment>
<comment type="pathway">
    <text evidence="1">Cofactor biosynthesis; adenosylcobalamin biosynthesis.</text>
</comment>
<comment type="subcellular location">
    <subcellularLocation>
        <location evidence="1">Cell membrane</location>
        <topology evidence="1">Multi-pass membrane protein</topology>
    </subcellularLocation>
</comment>
<comment type="similarity">
    <text evidence="1">Belongs to the CobD/CbiB family.</text>
</comment>
<accession>A6UNS5</accession>